<dbReference type="EC" id="2.4.2.21" evidence="1"/>
<dbReference type="EMBL" id="CP000243">
    <property type="protein sequence ID" value="ABE07697.1"/>
    <property type="molecule type" value="Genomic_DNA"/>
</dbReference>
<dbReference type="RefSeq" id="WP_001166163.1">
    <property type="nucleotide sequence ID" value="NZ_CP064825.1"/>
</dbReference>
<dbReference type="SMR" id="Q1RAB7"/>
<dbReference type="GeneID" id="86946915"/>
<dbReference type="KEGG" id="eci:UTI89_C2229"/>
<dbReference type="HOGENOM" id="CLU_002982_0_0_6"/>
<dbReference type="UniPathway" id="UPA00061">
    <property type="reaction ID" value="UER00516"/>
</dbReference>
<dbReference type="Proteomes" id="UP000001952">
    <property type="component" value="Chromosome"/>
</dbReference>
<dbReference type="GO" id="GO:0008939">
    <property type="term" value="F:nicotinate-nucleotide-dimethylbenzimidazole phosphoribosyltransferase activity"/>
    <property type="evidence" value="ECO:0007669"/>
    <property type="project" value="UniProtKB-UniRule"/>
</dbReference>
<dbReference type="GO" id="GO:0009236">
    <property type="term" value="P:cobalamin biosynthetic process"/>
    <property type="evidence" value="ECO:0007669"/>
    <property type="project" value="UniProtKB-KW"/>
</dbReference>
<dbReference type="CDD" id="cd02439">
    <property type="entry name" value="DMB-PRT_CobT"/>
    <property type="match status" value="1"/>
</dbReference>
<dbReference type="FunFam" id="3.40.50.10210:FF:000001">
    <property type="entry name" value="Nicotinate-nucleotide--dimethylbenzimidazole phosphoribosyltransferase"/>
    <property type="match status" value="1"/>
</dbReference>
<dbReference type="Gene3D" id="1.10.1610.10">
    <property type="match status" value="2"/>
</dbReference>
<dbReference type="Gene3D" id="3.40.50.10210">
    <property type="match status" value="1"/>
</dbReference>
<dbReference type="HAMAP" id="MF_00230">
    <property type="entry name" value="CobT"/>
    <property type="match status" value="1"/>
</dbReference>
<dbReference type="InterPro" id="IPR003200">
    <property type="entry name" value="Nict_dMeBzImd_PRibTrfase"/>
</dbReference>
<dbReference type="InterPro" id="IPR017846">
    <property type="entry name" value="Nict_dMeBzImd_PRibTrfase_bact"/>
</dbReference>
<dbReference type="InterPro" id="IPR023195">
    <property type="entry name" value="Nict_dMeBzImd_PRibTrfase_N"/>
</dbReference>
<dbReference type="InterPro" id="IPR036087">
    <property type="entry name" value="Nict_dMeBzImd_PRibTrfase_sf"/>
</dbReference>
<dbReference type="NCBIfam" id="TIGR03160">
    <property type="entry name" value="cobT_DBIPRT"/>
    <property type="match status" value="1"/>
</dbReference>
<dbReference type="NCBIfam" id="NF000996">
    <property type="entry name" value="PRK00105.1"/>
    <property type="match status" value="1"/>
</dbReference>
<dbReference type="PANTHER" id="PTHR43463">
    <property type="entry name" value="NICOTINATE-NUCLEOTIDE--DIMETHYLBENZIMIDAZOLE PHOSPHORIBOSYLTRANSFERASE"/>
    <property type="match status" value="1"/>
</dbReference>
<dbReference type="PANTHER" id="PTHR43463:SF1">
    <property type="entry name" value="NICOTINATE-NUCLEOTIDE--DIMETHYLBENZIMIDAZOLE PHOSPHORIBOSYLTRANSFERASE"/>
    <property type="match status" value="1"/>
</dbReference>
<dbReference type="Pfam" id="PF02277">
    <property type="entry name" value="DBI_PRT"/>
    <property type="match status" value="1"/>
</dbReference>
<dbReference type="SUPFAM" id="SSF52733">
    <property type="entry name" value="Nicotinate mononucleotide:5,6-dimethylbenzimidazole phosphoribosyltransferase (CobT)"/>
    <property type="match status" value="1"/>
</dbReference>
<reference key="1">
    <citation type="journal article" date="2006" name="Proc. Natl. Acad. Sci. U.S.A.">
        <title>Identification of genes subject to positive selection in uropathogenic strains of Escherichia coli: a comparative genomics approach.</title>
        <authorList>
            <person name="Chen S.L."/>
            <person name="Hung C.-S."/>
            <person name="Xu J."/>
            <person name="Reigstad C.S."/>
            <person name="Magrini V."/>
            <person name="Sabo A."/>
            <person name="Blasiar D."/>
            <person name="Bieri T."/>
            <person name="Meyer R.R."/>
            <person name="Ozersky P."/>
            <person name="Armstrong J.R."/>
            <person name="Fulton R.S."/>
            <person name="Latreille J.P."/>
            <person name="Spieth J."/>
            <person name="Hooton T.M."/>
            <person name="Mardis E.R."/>
            <person name="Hultgren S.J."/>
            <person name="Gordon J.I."/>
        </authorList>
    </citation>
    <scope>NUCLEOTIDE SEQUENCE [LARGE SCALE GENOMIC DNA]</scope>
    <source>
        <strain>UTI89 / UPEC</strain>
    </source>
</reference>
<accession>Q1RAB7</accession>
<comment type="function">
    <text evidence="1">Catalyzes the synthesis of alpha-ribazole-5'-phosphate from nicotinate mononucleotide (NAMN) and 5,6-dimethylbenzimidazole (DMB).</text>
</comment>
<comment type="catalytic activity">
    <reaction evidence="1">
        <text>5,6-dimethylbenzimidazole + nicotinate beta-D-ribonucleotide = alpha-ribazole 5'-phosphate + nicotinate + H(+)</text>
        <dbReference type="Rhea" id="RHEA:11196"/>
        <dbReference type="ChEBI" id="CHEBI:15378"/>
        <dbReference type="ChEBI" id="CHEBI:15890"/>
        <dbReference type="ChEBI" id="CHEBI:32544"/>
        <dbReference type="ChEBI" id="CHEBI:57502"/>
        <dbReference type="ChEBI" id="CHEBI:57918"/>
        <dbReference type="EC" id="2.4.2.21"/>
    </reaction>
</comment>
<comment type="pathway">
    <text evidence="1">Nucleoside biosynthesis; alpha-ribazole biosynthesis; alpha-ribazole from 5,6-dimethylbenzimidazole: step 1/2.</text>
</comment>
<comment type="subunit">
    <text evidence="1">Homodimer.</text>
</comment>
<comment type="similarity">
    <text evidence="1">Belongs to the CobT family.</text>
</comment>
<name>COBT_ECOUT</name>
<gene>
    <name evidence="1" type="primary">cobT</name>
    <name type="ordered locus">UTI89_C2229</name>
</gene>
<organism>
    <name type="scientific">Escherichia coli (strain UTI89 / UPEC)</name>
    <dbReference type="NCBI Taxonomy" id="364106"/>
    <lineage>
        <taxon>Bacteria</taxon>
        <taxon>Pseudomonadati</taxon>
        <taxon>Pseudomonadota</taxon>
        <taxon>Gammaproteobacteria</taxon>
        <taxon>Enterobacterales</taxon>
        <taxon>Enterobacteriaceae</taxon>
        <taxon>Escherichia</taxon>
    </lineage>
</organism>
<evidence type="ECO:0000255" key="1">
    <source>
        <dbReference type="HAMAP-Rule" id="MF_00230"/>
    </source>
</evidence>
<proteinExistence type="inferred from homology"/>
<feature type="chain" id="PRO_1000021596" description="Nicotinate-nucleotide--dimethylbenzimidazole phosphoribosyltransferase">
    <location>
        <begin position="1"/>
        <end position="359"/>
    </location>
</feature>
<feature type="active site" description="Proton acceptor" evidence="1">
    <location>
        <position position="318"/>
    </location>
</feature>
<protein>
    <recommendedName>
        <fullName evidence="1">Nicotinate-nucleotide--dimethylbenzimidazole phosphoribosyltransferase</fullName>
        <shortName evidence="1">NN:DBI PRT</shortName>
        <ecNumber evidence="1">2.4.2.21</ecNumber>
    </recommendedName>
    <alternativeName>
        <fullName evidence="1">N(1)-alpha-phosphoribosyltransferase</fullName>
    </alternativeName>
</protein>
<keyword id="KW-0169">Cobalamin biosynthesis</keyword>
<keyword id="KW-0328">Glycosyltransferase</keyword>
<keyword id="KW-0808">Transferase</keyword>
<sequence length="359" mass="36860">MQILADLLNTIPAINSAAMSRAQRHVDGLLKPVGSLGKLEALAIQLAGMPGLNGIPHVGKKAVLVMCADHGVWEEGVAISPKEVTAIQAENMTRGTTGVCVLAAQAGANVHVIDVGIDTAEPIPGLINMRVARGSGNIASAPAMSRRQAEKLLLDVICYTRELAKNGVTLFGVGELGMANTTPAAAIVSTITGRDPEEVVGIGANLPTDKLANKIDVVRRAITLNQPNPQDGVDVLAKVGGFDLVGIAGVMLGAASCGLPVLLDGFLSYAAALAACQMSPAIKPYLIPSHLSAEKGARIALSHLGLEPYLNMDMRLGEGSGAALAMSIIEAACAIYNNMGELAASNIVLPGNTTSDLNS</sequence>